<comment type="function">
    <text evidence="5 6">Pseudokinases lacking protein kinase activity and unable to bind ATP-analogs (PubMed:24556575). Negative regulator of pathogen-associated molecular patterns- (PAMP-) triggered immunity by limiting BAK1-receptor complex formation in the absence of ligands (PubMed:24388849).</text>
</comment>
<comment type="subunit">
    <text evidence="5 6">Interacts constitutively with BAK1, when phosphorylated, thereby preventing interaction with the ligand-binding LRR-RLK FLS2. Upon infection, pathogen-associated molecular patterns (PAMP) perception leads to BIR2 release from the BAK1 complex and enables the recruitment of BAK1 into the FLS2 complex.</text>
</comment>
<comment type="subcellular location">
    <subcellularLocation>
        <location evidence="5">Cell membrane</location>
        <topology evidence="5">Single-pass type I membrane protein</topology>
    </subcellularLocation>
</comment>
<comment type="induction">
    <text evidence="5">Induced by nonpathogenic bacteria or pathogen-associated molecular patterns (PAMP) treatments.</text>
</comment>
<comment type="domain">
    <text evidence="3 6">The protein kinase domain is predicted to be catalytically inactive.</text>
</comment>
<comment type="PTM">
    <text evidence="5">Phosphorylated by BAK1, this interacts promotes interaction with BAK1.</text>
</comment>
<comment type="disruption phenotype">
    <text evidence="5">Increased cell death spreading after Alternaria brassicicola infection, and enhanced salicylic acid (SA) responses and resistance to the biotrophic bacterial pathogen Pseudomonas syringae pv. tomato DC3000. Impact on several BAK1-regulated processes, such as hyperresponsiveness to pathogen-associated molecular patterns (PAMP), enhanced cell death, and resistance to bacterial pathogens, but normal brassinosteroid-(BR-)regulated growth.</text>
</comment>
<comment type="similarity">
    <text evidence="8">Belongs to the protein kinase superfamily. Ser/Thr protein kinase family.</text>
</comment>
<comment type="caution">
    <text evidence="6">Nucleotide binding site is not accessible for binding to ATP-analogs.</text>
</comment>
<sequence>MKEIGSKPRKLLPLCFIIFLCFCSSVMAADEDDIRCLRGLKASLTDPQNALKSWNFDNTTLGFLCNFVGVSCWNNQENRVINLELRDMGLSGKIPDSLQYCASLQKLDLSSNRLSGNIPTELCNWLPFLVSLDLSNNELNGEIPPDLAKCSFVNSLVLSDNRLSGQIPVQFSALGRLGRFSVANNDLSGRIPVFFSSPSYSSDDFSGNKGLCGRPLSSSCGGLSKKNLGIIIAAGVFGAAASMLLAFGIWWYYHLKWTRRRRSGLTEVGVSGLAQRLRSHKLTQVSLFQKPLVKVKLGDLMAATNNFNSENIIVSTRTGTTYKALLPDGSALAVKHLSTCKLGEREFRYEMNQLWELRHSNLAPLLGFCVVEEEKFLVYKYMSNGTLHSLLDSNRGELDWSTRFRIGLGAARGLAWLHHGCRPPILHQNICSSVILIDEDFDARIIDSGLARLMVPSDNNESSFMTGDLGEFGYVAPEYSTTMLASLKGDVYGLGVVLLELATGLKAVGGEGFKGSLVDWVKQLESSGRIAETFDENIRGKGHDEEISKFVEIALNCVSSRPKERWSMFQAYQSLKAIAEKQGYSFSEQDDDFPLIFDTQENEKV</sequence>
<proteinExistence type="evidence at protein level"/>
<reference key="1">
    <citation type="journal article" date="2000" name="DNA Res.">
        <title>Structural analysis of Arabidopsis thaliana chromosome 3. I. Sequence features of the regions of 4,504,864 bp covered by sixty P1 and TAC clones.</title>
        <authorList>
            <person name="Sato S."/>
            <person name="Nakamura Y."/>
            <person name="Kaneko T."/>
            <person name="Katoh T."/>
            <person name="Asamizu E."/>
            <person name="Tabata S."/>
        </authorList>
    </citation>
    <scope>NUCLEOTIDE SEQUENCE [LARGE SCALE GENOMIC DNA]</scope>
    <source>
        <strain>cv. Columbia</strain>
    </source>
</reference>
<reference key="2">
    <citation type="journal article" date="2017" name="Plant J.">
        <title>Araport11: a complete reannotation of the Arabidopsis thaliana reference genome.</title>
        <authorList>
            <person name="Cheng C.Y."/>
            <person name="Krishnakumar V."/>
            <person name="Chan A.P."/>
            <person name="Thibaud-Nissen F."/>
            <person name="Schobel S."/>
            <person name="Town C.D."/>
        </authorList>
    </citation>
    <scope>GENOME REANNOTATION</scope>
    <source>
        <strain>cv. Columbia</strain>
    </source>
</reference>
<reference key="3">
    <citation type="journal article" date="2002" name="Science">
        <title>Functional annotation of a full-length Arabidopsis cDNA collection.</title>
        <authorList>
            <person name="Seki M."/>
            <person name="Narusaka M."/>
            <person name="Kamiya A."/>
            <person name="Ishida J."/>
            <person name="Satou M."/>
            <person name="Sakurai T."/>
            <person name="Nakajima M."/>
            <person name="Enju A."/>
            <person name="Akiyama K."/>
            <person name="Oono Y."/>
            <person name="Muramatsu M."/>
            <person name="Hayashizaki Y."/>
            <person name="Kawai J."/>
            <person name="Carninci P."/>
            <person name="Itoh M."/>
            <person name="Ishii Y."/>
            <person name="Arakawa T."/>
            <person name="Shibata K."/>
            <person name="Shinagawa A."/>
            <person name="Shinozaki K."/>
        </authorList>
    </citation>
    <scope>NUCLEOTIDE SEQUENCE [LARGE SCALE MRNA]</scope>
    <source>
        <strain>cv. Columbia</strain>
    </source>
</reference>
<reference key="4">
    <citation type="journal article" date="2010" name="BMC Genomics">
        <title>Genome-wide cloning and sequence analysis of leucine-rich repeat receptor-like protein kinase genes in Arabidopsis thaliana.</title>
        <authorList>
            <person name="Gou X."/>
            <person name="He K."/>
            <person name="Yang H."/>
            <person name="Yuan T."/>
            <person name="Lin H."/>
            <person name="Clouse S.D."/>
            <person name="Li J."/>
        </authorList>
    </citation>
    <scope>NUCLEOTIDE SEQUENCE [LARGE SCALE MRNA]</scope>
    <source>
        <strain>cv. Columbia</strain>
    </source>
</reference>
<reference key="5">
    <citation type="journal article" date="2007" name="Biochem. Biophys. Res. Commun.">
        <title>Novel subsets of the Arabidopsis plasmalemma phosphoproteome identify phosphorylation sites in secondary active transporters.</title>
        <authorList>
            <person name="Hem S."/>
            <person name="Rofidal V."/>
            <person name="Sommerer N."/>
            <person name="Rossignol M."/>
        </authorList>
    </citation>
    <scope>IDENTIFICATION BY MASS SPECTROMETRY [LARGE SCALE ANALYSIS]</scope>
</reference>
<reference key="6">
    <citation type="journal article" date="2014" name="Curr. Biol.">
        <title>The leucine-rich repeat receptor kinase BIR2 is a negative regulator of BAK1 in plant immunity.</title>
        <authorList>
            <person name="Halter T."/>
            <person name="Imkampe J."/>
            <person name="Mazzotta S."/>
            <person name="Wierzba M."/>
            <person name="Postel S."/>
            <person name="Buecherl C."/>
            <person name="Kiefer C."/>
            <person name="Stahl M."/>
            <person name="Chinchilla D."/>
            <person name="Wang X."/>
            <person name="Nuernberger T."/>
            <person name="Zipfel C."/>
            <person name="Clouse S."/>
            <person name="Borst J.W."/>
            <person name="Boeren S."/>
            <person name="de Vries S.C."/>
            <person name="Tax F."/>
            <person name="Kemmerling B."/>
        </authorList>
    </citation>
    <scope>FUNCTION</scope>
    <scope>DISRUPTION PHENOTYPE</scope>
    <scope>SUBCELLULAR LOCATION</scope>
    <scope>INTERACTION WITH BAK1</scope>
    <scope>INDUCTION BY PAMP</scope>
    <scope>PHOSPHORYLATION BY BAK1</scope>
    <source>
        <strain>cv. Columbia</strain>
    </source>
</reference>
<reference key="7">
    <citation type="journal article" date="2014" name="J. Struct. Biol.">
        <title>Structure of the pseudokinase domain of BIR2, a regulator of BAK1-mediated immune signaling in Arabidopsis.</title>
        <authorList>
            <person name="Blaum B.S."/>
            <person name="Mazzotta S."/>
            <person name="Noeldeke E.R."/>
            <person name="Halter T."/>
            <person name="Madlung J."/>
            <person name="Kemmerling B."/>
            <person name="Stehle T."/>
        </authorList>
    </citation>
    <scope>X-RAY CRYSTALLOGRAPHY (2.00 ANGSTROMS) OF 271-605</scope>
    <scope>FUNCTION</scope>
    <scope>PHOSPHORYLATION AT SER-271; THR-283; SER-286; THR-304; SER-330; SER-389; SER-448; SER-462; THR-466 AND THR-533</scope>
    <scope>PHOSPHORYLATION BY BAK1</scope>
    <scope>INTERACTION WITH BAK1</scope>
    <scope>DOMAIN</scope>
</reference>
<evidence type="ECO:0000250" key="1">
    <source>
        <dbReference type="UniProtKB" id="Q94AG2"/>
    </source>
</evidence>
<evidence type="ECO:0000255" key="2"/>
<evidence type="ECO:0000255" key="3">
    <source>
        <dbReference type="PROSITE-ProRule" id="PRU00159"/>
    </source>
</evidence>
<evidence type="ECO:0000255" key="4">
    <source>
        <dbReference type="PROSITE-ProRule" id="PRU00498"/>
    </source>
</evidence>
<evidence type="ECO:0000269" key="5">
    <source>
    </source>
</evidence>
<evidence type="ECO:0000269" key="6">
    <source>
    </source>
</evidence>
<evidence type="ECO:0000303" key="7">
    <source>
    </source>
</evidence>
<evidence type="ECO:0000305" key="8"/>
<evidence type="ECO:0000312" key="9">
    <source>
        <dbReference type="Araport" id="AT3G28450"/>
    </source>
</evidence>
<evidence type="ECO:0000312" key="10">
    <source>
        <dbReference type="EMBL" id="BAB02861.1"/>
    </source>
</evidence>
<evidence type="ECO:0007829" key="11">
    <source>
        <dbReference type="PDB" id="4L68"/>
    </source>
</evidence>
<evidence type="ECO:0007829" key="12">
    <source>
        <dbReference type="PDB" id="6FG7"/>
    </source>
</evidence>
<accession>Q9LSI9</accession>
<name>BIR2_ARATH</name>
<gene>
    <name evidence="7" type="primary">BIR2</name>
    <name evidence="9" type="ordered locus">At3g28450</name>
    <name evidence="10" type="ORF">MFJ20.14</name>
</gene>
<feature type="signal peptide" evidence="2">
    <location>
        <begin position="1"/>
        <end position="28"/>
    </location>
</feature>
<feature type="chain" id="PRO_5005371271" description="Inactive LRR receptor-like serine/threonine-protein kinase BIR2" evidence="2">
    <location>
        <begin position="29"/>
        <end position="605"/>
    </location>
</feature>
<feature type="topological domain" description="Extracellular" evidence="8">
    <location>
        <begin position="29"/>
        <end position="229"/>
    </location>
</feature>
<feature type="transmembrane region" description="Helical" evidence="2">
    <location>
        <begin position="230"/>
        <end position="250"/>
    </location>
</feature>
<feature type="topological domain" description="Cytoplasmic" evidence="8">
    <location>
        <begin position="251"/>
        <end position="605"/>
    </location>
</feature>
<feature type="repeat" description="LRR 1" evidence="2">
    <location>
        <begin position="101"/>
        <end position="125"/>
    </location>
</feature>
<feature type="repeat" description="LRR 2" evidence="2">
    <location>
        <begin position="127"/>
        <end position="150"/>
    </location>
</feature>
<feature type="repeat" description="LRR 3" evidence="2">
    <location>
        <begin position="152"/>
        <end position="173"/>
    </location>
</feature>
<feature type="repeat" description="LRR 4" evidence="2">
    <location>
        <begin position="174"/>
        <end position="197"/>
    </location>
</feature>
<feature type="domain" description="Protein kinase" evidence="3">
    <location>
        <begin position="307"/>
        <end position="578"/>
    </location>
</feature>
<feature type="binding site" evidence="3">
    <location>
        <begin position="313"/>
        <end position="321"/>
    </location>
    <ligand>
        <name>ATP</name>
        <dbReference type="ChEBI" id="CHEBI:30616"/>
    </ligand>
</feature>
<feature type="binding site" evidence="3">
    <location>
        <position position="335"/>
    </location>
    <ligand>
        <name>ATP</name>
        <dbReference type="ChEBI" id="CHEBI:30616"/>
    </ligand>
</feature>
<feature type="modified residue" description="Phosphoserine; by BAK1" evidence="6">
    <location>
        <position position="271"/>
    </location>
</feature>
<feature type="modified residue" description="Phosphothreonine; by BAK1" evidence="6">
    <location>
        <position position="283"/>
    </location>
</feature>
<feature type="modified residue" description="Phosphoserine; by BAK1" evidence="6">
    <location>
        <position position="286"/>
    </location>
</feature>
<feature type="modified residue" description="Phosphothreonine; by BAK1" evidence="6">
    <location>
        <position position="304"/>
    </location>
</feature>
<feature type="modified residue" description="Phosphoserine; by BAK1" evidence="6">
    <location>
        <position position="330"/>
    </location>
</feature>
<feature type="modified residue" description="Phosphoserine; by BAK1" evidence="6">
    <location>
        <position position="389"/>
    </location>
</feature>
<feature type="modified residue" description="Phosphothreonine" evidence="1">
    <location>
        <position position="402"/>
    </location>
</feature>
<feature type="modified residue" description="Phosphoserine; by BAK1" evidence="6">
    <location>
        <position position="448"/>
    </location>
</feature>
<feature type="modified residue" description="Phosphoserine; by BAK1" evidence="6">
    <location>
        <position position="462"/>
    </location>
</feature>
<feature type="modified residue" description="Phosphothreonine; by BAK1" evidence="6">
    <location>
        <position position="466"/>
    </location>
</feature>
<feature type="modified residue" description="Phosphotyrosine" evidence="1">
    <location>
        <position position="479"/>
    </location>
</feature>
<feature type="modified residue" description="Phosphothreonine" evidence="1">
    <location>
        <position position="482"/>
    </location>
</feature>
<feature type="modified residue" description="Phosphoserine" evidence="1">
    <location>
        <position position="486"/>
    </location>
</feature>
<feature type="modified residue" description="Phosphothreonine; by BAK1" evidence="6">
    <location>
        <position position="533"/>
    </location>
</feature>
<feature type="glycosylation site" description="N-linked (GlcNAc...) asparagine" evidence="4">
    <location>
        <position position="58"/>
    </location>
</feature>
<feature type="helix" evidence="12">
    <location>
        <begin position="33"/>
        <end position="43"/>
    </location>
</feature>
<feature type="turn" evidence="12">
    <location>
        <begin position="50"/>
        <end position="53"/>
    </location>
</feature>
<feature type="helix" evidence="12">
    <location>
        <begin position="63"/>
        <end position="66"/>
    </location>
</feature>
<feature type="strand" evidence="12">
    <location>
        <begin position="70"/>
        <end position="72"/>
    </location>
</feature>
<feature type="strand" evidence="12">
    <location>
        <begin position="80"/>
        <end position="84"/>
    </location>
</feature>
<feature type="helix" evidence="12">
    <location>
        <begin position="96"/>
        <end position="100"/>
    </location>
</feature>
<feature type="strand" evidence="12">
    <location>
        <begin position="106"/>
        <end position="108"/>
    </location>
</feature>
<feature type="strand" evidence="12">
    <location>
        <begin position="111"/>
        <end position="114"/>
    </location>
</feature>
<feature type="helix" evidence="12">
    <location>
        <begin position="122"/>
        <end position="125"/>
    </location>
</feature>
<feature type="strand" evidence="12">
    <location>
        <begin position="130"/>
        <end position="133"/>
    </location>
</feature>
<feature type="strand" evidence="12">
    <location>
        <begin position="140"/>
        <end position="142"/>
    </location>
</feature>
<feature type="helix" evidence="12">
    <location>
        <begin position="145"/>
        <end position="149"/>
    </location>
</feature>
<feature type="strand" evidence="12">
    <location>
        <begin position="154"/>
        <end position="157"/>
    </location>
</feature>
<feature type="strand" evidence="12">
    <location>
        <begin position="160"/>
        <end position="165"/>
    </location>
</feature>
<feature type="helix" evidence="12">
    <location>
        <begin position="169"/>
        <end position="173"/>
    </location>
</feature>
<feature type="strand" evidence="12">
    <location>
        <begin position="179"/>
        <end position="181"/>
    </location>
</feature>
<feature type="strand" evidence="12">
    <location>
        <begin position="184"/>
        <end position="190"/>
    </location>
</feature>
<feature type="helix" evidence="12">
    <location>
        <begin position="193"/>
        <end position="196"/>
    </location>
</feature>
<feature type="helix" evidence="12">
    <location>
        <begin position="202"/>
        <end position="205"/>
    </location>
</feature>
<feature type="strand" evidence="12">
    <location>
        <begin position="210"/>
        <end position="213"/>
    </location>
</feature>
<feature type="strand" evidence="12">
    <location>
        <begin position="216"/>
        <end position="218"/>
    </location>
</feature>
<feature type="helix" evidence="11">
    <location>
        <begin position="273"/>
        <end position="276"/>
    </location>
</feature>
<feature type="turn" evidence="11">
    <location>
        <begin position="277"/>
        <end position="279"/>
    </location>
</feature>
<feature type="strand" evidence="11">
    <location>
        <begin position="286"/>
        <end position="289"/>
    </location>
</feature>
<feature type="helix" evidence="11">
    <location>
        <begin position="297"/>
        <end position="303"/>
    </location>
</feature>
<feature type="turn" evidence="11">
    <location>
        <begin position="304"/>
        <end position="307"/>
    </location>
</feature>
<feature type="helix" evidence="11">
    <location>
        <begin position="309"/>
        <end position="311"/>
    </location>
</feature>
<feature type="strand" evidence="11">
    <location>
        <begin position="312"/>
        <end position="316"/>
    </location>
</feature>
<feature type="strand" evidence="11">
    <location>
        <begin position="319"/>
        <end position="325"/>
    </location>
</feature>
<feature type="strand" evidence="11">
    <location>
        <begin position="331"/>
        <end position="337"/>
    </location>
</feature>
<feature type="helix" evidence="11">
    <location>
        <begin position="344"/>
        <end position="355"/>
    </location>
</feature>
<feature type="strand" evidence="11">
    <location>
        <begin position="365"/>
        <end position="371"/>
    </location>
</feature>
<feature type="strand" evidence="11">
    <location>
        <begin position="374"/>
        <end position="380"/>
    </location>
</feature>
<feature type="helix" evidence="11">
    <location>
        <begin position="387"/>
        <end position="393"/>
    </location>
</feature>
<feature type="helix" evidence="11">
    <location>
        <begin position="395"/>
        <end position="397"/>
    </location>
</feature>
<feature type="helix" evidence="11">
    <location>
        <begin position="400"/>
        <end position="419"/>
    </location>
</feature>
<feature type="strand" evidence="11">
    <location>
        <begin position="421"/>
        <end position="423"/>
    </location>
</feature>
<feature type="strand" evidence="11">
    <location>
        <begin position="434"/>
        <end position="437"/>
    </location>
</feature>
<feature type="strand" evidence="11">
    <location>
        <begin position="443"/>
        <end position="445"/>
    </location>
</feature>
<feature type="turn" evidence="11">
    <location>
        <begin position="448"/>
        <end position="450"/>
    </location>
</feature>
<feature type="helix" evidence="11">
    <location>
        <begin position="451"/>
        <end position="453"/>
    </location>
</feature>
<feature type="helix" evidence="11">
    <location>
        <begin position="479"/>
        <end position="482"/>
    </location>
</feature>
<feature type="helix" evidence="11">
    <location>
        <begin position="487"/>
        <end position="503"/>
    </location>
</feature>
<feature type="helix" evidence="11">
    <location>
        <begin position="517"/>
        <end position="526"/>
    </location>
</feature>
<feature type="helix" evidence="11">
    <location>
        <begin position="530"/>
        <end position="533"/>
    </location>
</feature>
<feature type="turn" evidence="11">
    <location>
        <begin position="536"/>
        <end position="540"/>
    </location>
</feature>
<feature type="helix" evidence="11">
    <location>
        <begin position="544"/>
        <end position="557"/>
    </location>
</feature>
<feature type="turn" evidence="11">
    <location>
        <begin position="562"/>
        <end position="564"/>
    </location>
</feature>
<feature type="helix" evidence="11">
    <location>
        <begin position="568"/>
        <end position="580"/>
    </location>
</feature>
<feature type="turn" evidence="11">
    <location>
        <begin position="581"/>
        <end position="583"/>
    </location>
</feature>
<feature type="helix" evidence="11">
    <location>
        <begin position="587"/>
        <end position="590"/>
    </location>
</feature>
<dbReference type="EMBL" id="AB026644">
    <property type="protein sequence ID" value="BAB02861.1"/>
    <property type="molecule type" value="Genomic_DNA"/>
</dbReference>
<dbReference type="EMBL" id="CP002686">
    <property type="protein sequence ID" value="AEE77446.1"/>
    <property type="molecule type" value="Genomic_DNA"/>
</dbReference>
<dbReference type="EMBL" id="AK117357">
    <property type="protein sequence ID" value="BAC42027.1"/>
    <property type="molecule type" value="mRNA"/>
</dbReference>
<dbReference type="EMBL" id="FJ708730">
    <property type="protein sequence ID" value="ACN59325.1"/>
    <property type="molecule type" value="mRNA"/>
</dbReference>
<dbReference type="RefSeq" id="NP_189486.1">
    <property type="nucleotide sequence ID" value="NM_113765.3"/>
</dbReference>
<dbReference type="PDB" id="4L68">
    <property type="method" value="X-ray"/>
    <property type="resolution" value="2.00 A"/>
    <property type="chains" value="A/B=271-605"/>
</dbReference>
<dbReference type="PDB" id="6FG7">
    <property type="method" value="X-ray"/>
    <property type="resolution" value="1.90 A"/>
    <property type="chains" value="A/B=1-223"/>
</dbReference>
<dbReference type="PDBsum" id="4L68"/>
<dbReference type="PDBsum" id="6FG7"/>
<dbReference type="SMR" id="Q9LSI9"/>
<dbReference type="FunCoup" id="Q9LSI9">
    <property type="interactions" value="531"/>
</dbReference>
<dbReference type="IntAct" id="Q9LSI9">
    <property type="interactions" value="35"/>
</dbReference>
<dbReference type="STRING" id="3702.Q9LSI9"/>
<dbReference type="GlyCosmos" id="Q9LSI9">
    <property type="glycosylation" value="1 site, No reported glycans"/>
</dbReference>
<dbReference type="GlyGen" id="Q9LSI9">
    <property type="glycosylation" value="1 site"/>
</dbReference>
<dbReference type="iPTMnet" id="Q9LSI9"/>
<dbReference type="PaxDb" id="3702-AT3G28450.1"/>
<dbReference type="ProteomicsDB" id="240546"/>
<dbReference type="EnsemblPlants" id="AT3G28450.1">
    <property type="protein sequence ID" value="AT3G28450.1"/>
    <property type="gene ID" value="AT3G28450"/>
</dbReference>
<dbReference type="GeneID" id="822474"/>
<dbReference type="Gramene" id="AT3G28450.1">
    <property type="protein sequence ID" value="AT3G28450.1"/>
    <property type="gene ID" value="AT3G28450"/>
</dbReference>
<dbReference type="KEGG" id="ath:AT3G28450"/>
<dbReference type="Araport" id="AT3G28450"/>
<dbReference type="TAIR" id="AT3G28450">
    <property type="gene designation" value="BIR2"/>
</dbReference>
<dbReference type="eggNOG" id="ENOG502QRP1">
    <property type="taxonomic scope" value="Eukaryota"/>
</dbReference>
<dbReference type="HOGENOM" id="CLU_000288_92_6_1"/>
<dbReference type="InParanoid" id="Q9LSI9"/>
<dbReference type="OMA" id="IIQQNIC"/>
<dbReference type="PhylomeDB" id="Q9LSI9"/>
<dbReference type="EvolutionaryTrace" id="Q9LSI9"/>
<dbReference type="PRO" id="PR:Q9LSI9"/>
<dbReference type="Proteomes" id="UP000006548">
    <property type="component" value="Chromosome 3"/>
</dbReference>
<dbReference type="ExpressionAtlas" id="Q9LSI9">
    <property type="expression patterns" value="baseline and differential"/>
</dbReference>
<dbReference type="GO" id="GO:0009507">
    <property type="term" value="C:chloroplast"/>
    <property type="evidence" value="ECO:0007005"/>
    <property type="project" value="TAIR"/>
</dbReference>
<dbReference type="GO" id="GO:0005829">
    <property type="term" value="C:cytosol"/>
    <property type="evidence" value="ECO:0007005"/>
    <property type="project" value="TAIR"/>
</dbReference>
<dbReference type="GO" id="GO:0005886">
    <property type="term" value="C:plasma membrane"/>
    <property type="evidence" value="ECO:0000314"/>
    <property type="project" value="UniProtKB"/>
</dbReference>
<dbReference type="GO" id="GO:0000166">
    <property type="term" value="F:nucleotide binding"/>
    <property type="evidence" value="ECO:0007669"/>
    <property type="project" value="UniProtKB-KW"/>
</dbReference>
<dbReference type="GO" id="GO:0006952">
    <property type="term" value="P:defense response"/>
    <property type="evidence" value="ECO:0007669"/>
    <property type="project" value="UniProtKB-KW"/>
</dbReference>
<dbReference type="GO" id="GO:1900425">
    <property type="term" value="P:negative regulation of defense response to bacterium"/>
    <property type="evidence" value="ECO:0000315"/>
    <property type="project" value="UniProtKB"/>
</dbReference>
<dbReference type="GO" id="GO:1900150">
    <property type="term" value="P:regulation of defense response to fungus"/>
    <property type="evidence" value="ECO:0000315"/>
    <property type="project" value="UniProtKB"/>
</dbReference>
<dbReference type="FunFam" id="1.10.510.10:FF:000609">
    <property type="entry name" value="Inactive LRR receptor-like serine/threonine-protein kinase BIR2"/>
    <property type="match status" value="1"/>
</dbReference>
<dbReference type="FunFam" id="3.30.200.20:FF:000428">
    <property type="entry name" value="Inactive LRR receptor-like serine/threonine-protein kinase BIR2"/>
    <property type="match status" value="1"/>
</dbReference>
<dbReference type="FunFam" id="3.80.10.10:FF:000415">
    <property type="entry name" value="Inactive LRR receptor-like serine/threonine-protein kinase BIR2"/>
    <property type="match status" value="1"/>
</dbReference>
<dbReference type="Gene3D" id="3.30.200.20">
    <property type="entry name" value="Phosphorylase Kinase, domain 1"/>
    <property type="match status" value="1"/>
</dbReference>
<dbReference type="Gene3D" id="3.80.10.10">
    <property type="entry name" value="Ribonuclease Inhibitor"/>
    <property type="match status" value="1"/>
</dbReference>
<dbReference type="Gene3D" id="1.10.510.10">
    <property type="entry name" value="Transferase(Phosphotransferase) domain 1"/>
    <property type="match status" value="1"/>
</dbReference>
<dbReference type="InterPro" id="IPR011009">
    <property type="entry name" value="Kinase-like_dom_sf"/>
</dbReference>
<dbReference type="InterPro" id="IPR001611">
    <property type="entry name" value="Leu-rich_rpt"/>
</dbReference>
<dbReference type="InterPro" id="IPR032675">
    <property type="entry name" value="LRR_dom_sf"/>
</dbReference>
<dbReference type="InterPro" id="IPR013210">
    <property type="entry name" value="LRR_N_plant-typ"/>
</dbReference>
<dbReference type="InterPro" id="IPR046959">
    <property type="entry name" value="PRK1-6/SRF4-like"/>
</dbReference>
<dbReference type="InterPro" id="IPR000719">
    <property type="entry name" value="Prot_kinase_dom"/>
</dbReference>
<dbReference type="InterPro" id="IPR001245">
    <property type="entry name" value="Ser-Thr/Tyr_kinase_cat_dom"/>
</dbReference>
<dbReference type="PANTHER" id="PTHR48007:SF86">
    <property type="entry name" value="(WILD MALAYSIAN BANANA) HYPOTHETICAL PROTEIN"/>
    <property type="match status" value="1"/>
</dbReference>
<dbReference type="PANTHER" id="PTHR48007">
    <property type="entry name" value="LEUCINE-RICH REPEAT RECEPTOR-LIKE PROTEIN KINASE PXC1"/>
    <property type="match status" value="1"/>
</dbReference>
<dbReference type="Pfam" id="PF00560">
    <property type="entry name" value="LRR_1"/>
    <property type="match status" value="2"/>
</dbReference>
<dbReference type="Pfam" id="PF08263">
    <property type="entry name" value="LRRNT_2"/>
    <property type="match status" value="1"/>
</dbReference>
<dbReference type="Pfam" id="PF07714">
    <property type="entry name" value="PK_Tyr_Ser-Thr"/>
    <property type="match status" value="1"/>
</dbReference>
<dbReference type="PRINTS" id="PR00019">
    <property type="entry name" value="LEURICHRPT"/>
</dbReference>
<dbReference type="SUPFAM" id="SSF52058">
    <property type="entry name" value="L domain-like"/>
    <property type="match status" value="1"/>
</dbReference>
<dbReference type="SUPFAM" id="SSF56112">
    <property type="entry name" value="Protein kinase-like (PK-like)"/>
    <property type="match status" value="1"/>
</dbReference>
<dbReference type="PROSITE" id="PS50011">
    <property type="entry name" value="PROTEIN_KINASE_DOM"/>
    <property type="match status" value="1"/>
</dbReference>
<organism>
    <name type="scientific">Arabidopsis thaliana</name>
    <name type="common">Mouse-ear cress</name>
    <dbReference type="NCBI Taxonomy" id="3702"/>
    <lineage>
        <taxon>Eukaryota</taxon>
        <taxon>Viridiplantae</taxon>
        <taxon>Streptophyta</taxon>
        <taxon>Embryophyta</taxon>
        <taxon>Tracheophyta</taxon>
        <taxon>Spermatophyta</taxon>
        <taxon>Magnoliopsida</taxon>
        <taxon>eudicotyledons</taxon>
        <taxon>Gunneridae</taxon>
        <taxon>Pentapetalae</taxon>
        <taxon>rosids</taxon>
        <taxon>malvids</taxon>
        <taxon>Brassicales</taxon>
        <taxon>Brassicaceae</taxon>
        <taxon>Camelineae</taxon>
        <taxon>Arabidopsis</taxon>
    </lineage>
</organism>
<keyword id="KW-0002">3D-structure</keyword>
<keyword id="KW-0067">ATP-binding</keyword>
<keyword id="KW-1003">Cell membrane</keyword>
<keyword id="KW-0325">Glycoprotein</keyword>
<keyword id="KW-0433">Leucine-rich repeat</keyword>
<keyword id="KW-0472">Membrane</keyword>
<keyword id="KW-0547">Nucleotide-binding</keyword>
<keyword id="KW-0597">Phosphoprotein</keyword>
<keyword id="KW-0611">Plant defense</keyword>
<keyword id="KW-0675">Receptor</keyword>
<keyword id="KW-1185">Reference proteome</keyword>
<keyword id="KW-0677">Repeat</keyword>
<keyword id="KW-0732">Signal</keyword>
<keyword id="KW-0812">Transmembrane</keyword>
<keyword id="KW-1133">Transmembrane helix</keyword>
<protein>
    <recommendedName>
        <fullName evidence="8">Inactive LRR receptor-like serine/threonine-protein kinase BIR2</fullName>
    </recommendedName>
    <alternativeName>
        <fullName evidence="7">Protein BAK1-INTERACTING RECEPTOR-LIKE KINASE 2</fullName>
    </alternativeName>
</protein>